<dbReference type="EC" id="6.3.5.1" evidence="3"/>
<dbReference type="EMBL" id="BC103388">
    <property type="protein sequence ID" value="AAI03389.1"/>
    <property type="molecule type" value="mRNA"/>
</dbReference>
<dbReference type="RefSeq" id="NP_001029615.1">
    <property type="nucleotide sequence ID" value="NM_001034443.2"/>
</dbReference>
<dbReference type="SMR" id="Q3ZBF0"/>
<dbReference type="FunCoup" id="Q3ZBF0">
    <property type="interactions" value="2506"/>
</dbReference>
<dbReference type="STRING" id="9913.ENSBTAP00000074390"/>
<dbReference type="PaxDb" id="9913-ENSBTAP00000021894"/>
<dbReference type="GeneID" id="513400"/>
<dbReference type="KEGG" id="bta:513400"/>
<dbReference type="CTD" id="55191"/>
<dbReference type="VEuPathDB" id="HostDB:ENSBTAG00000016470"/>
<dbReference type="eggNOG" id="KOG2303">
    <property type="taxonomic scope" value="Eukaryota"/>
</dbReference>
<dbReference type="HOGENOM" id="CLU_011884_2_0_1"/>
<dbReference type="InParanoid" id="Q3ZBF0"/>
<dbReference type="OMA" id="TSQEVCN"/>
<dbReference type="OrthoDB" id="2020662at2759"/>
<dbReference type="TreeFam" id="TF351426"/>
<dbReference type="Reactome" id="R-BTA-196807">
    <property type="pathway name" value="Nicotinate metabolism"/>
</dbReference>
<dbReference type="UniPathway" id="UPA00253">
    <property type="reaction ID" value="UER00334"/>
</dbReference>
<dbReference type="Proteomes" id="UP000009136">
    <property type="component" value="Chromosome 29"/>
</dbReference>
<dbReference type="Bgee" id="ENSBTAG00000016470">
    <property type="expression patterns" value="Expressed in urinary bladder and 104 other cell types or tissues"/>
</dbReference>
<dbReference type="GO" id="GO:0005737">
    <property type="term" value="C:cytoplasm"/>
    <property type="evidence" value="ECO:0000318"/>
    <property type="project" value="GO_Central"/>
</dbReference>
<dbReference type="GO" id="GO:0005524">
    <property type="term" value="F:ATP binding"/>
    <property type="evidence" value="ECO:0007669"/>
    <property type="project" value="UniProtKB-KW"/>
</dbReference>
<dbReference type="GO" id="GO:0004359">
    <property type="term" value="F:glutaminase activity"/>
    <property type="evidence" value="ECO:0000318"/>
    <property type="project" value="GO_Central"/>
</dbReference>
<dbReference type="GO" id="GO:0003952">
    <property type="term" value="F:NAD+ synthase (glutamine-hydrolyzing) activity"/>
    <property type="evidence" value="ECO:0000318"/>
    <property type="project" value="GO_Central"/>
</dbReference>
<dbReference type="GO" id="GO:0009435">
    <property type="term" value="P:NAD biosynthetic process"/>
    <property type="evidence" value="ECO:0000318"/>
    <property type="project" value="GO_Central"/>
</dbReference>
<dbReference type="CDD" id="cd07570">
    <property type="entry name" value="GAT_Gln-NAD-synth"/>
    <property type="match status" value="1"/>
</dbReference>
<dbReference type="CDD" id="cd00553">
    <property type="entry name" value="NAD_synthase"/>
    <property type="match status" value="1"/>
</dbReference>
<dbReference type="FunFam" id="3.40.50.620:FF:000036">
    <property type="entry name" value="Glutamine-dependent NAD(+) synthetase"/>
    <property type="match status" value="1"/>
</dbReference>
<dbReference type="FunFam" id="3.60.110.10:FF:000007">
    <property type="entry name" value="Glutamine-dependent NAD(+) synthetase"/>
    <property type="match status" value="1"/>
</dbReference>
<dbReference type="Gene3D" id="3.60.110.10">
    <property type="entry name" value="Carbon-nitrogen hydrolase"/>
    <property type="match status" value="1"/>
</dbReference>
<dbReference type="Gene3D" id="3.40.50.620">
    <property type="entry name" value="HUPs"/>
    <property type="match status" value="1"/>
</dbReference>
<dbReference type="HAMAP" id="MF_02090">
    <property type="entry name" value="NadE_glutamine_dep"/>
    <property type="match status" value="1"/>
</dbReference>
<dbReference type="InterPro" id="IPR003010">
    <property type="entry name" value="C-N_Hydrolase"/>
</dbReference>
<dbReference type="InterPro" id="IPR036526">
    <property type="entry name" value="C-N_Hydrolase_sf"/>
</dbReference>
<dbReference type="InterPro" id="IPR014445">
    <property type="entry name" value="Gln-dep_NAD_synthase"/>
</dbReference>
<dbReference type="InterPro" id="IPR022310">
    <property type="entry name" value="NAD/GMP_synthase"/>
</dbReference>
<dbReference type="InterPro" id="IPR003694">
    <property type="entry name" value="NAD_synthase"/>
</dbReference>
<dbReference type="InterPro" id="IPR014729">
    <property type="entry name" value="Rossmann-like_a/b/a_fold"/>
</dbReference>
<dbReference type="NCBIfam" id="TIGR00552">
    <property type="entry name" value="nadE"/>
    <property type="match status" value="1"/>
</dbReference>
<dbReference type="PANTHER" id="PTHR23090:SF9">
    <property type="entry name" value="GLUTAMINE-DEPENDENT NAD(+) SYNTHETASE"/>
    <property type="match status" value="1"/>
</dbReference>
<dbReference type="PANTHER" id="PTHR23090">
    <property type="entry name" value="NH 3 /GLUTAMINE-DEPENDENT NAD + SYNTHETASE"/>
    <property type="match status" value="1"/>
</dbReference>
<dbReference type="Pfam" id="PF00795">
    <property type="entry name" value="CN_hydrolase"/>
    <property type="match status" value="1"/>
</dbReference>
<dbReference type="Pfam" id="PF02540">
    <property type="entry name" value="NAD_synthase"/>
    <property type="match status" value="1"/>
</dbReference>
<dbReference type="PIRSF" id="PIRSF006630">
    <property type="entry name" value="NADS_GAT"/>
    <property type="match status" value="1"/>
</dbReference>
<dbReference type="SUPFAM" id="SSF52402">
    <property type="entry name" value="Adenine nucleotide alpha hydrolases-like"/>
    <property type="match status" value="1"/>
</dbReference>
<dbReference type="SUPFAM" id="SSF56317">
    <property type="entry name" value="Carbon-nitrogen hydrolase"/>
    <property type="match status" value="1"/>
</dbReference>
<dbReference type="PROSITE" id="PS50263">
    <property type="entry name" value="CN_HYDROLASE"/>
    <property type="match status" value="1"/>
</dbReference>
<proteinExistence type="evidence at transcript level"/>
<organism>
    <name type="scientific">Bos taurus</name>
    <name type="common">Bovine</name>
    <dbReference type="NCBI Taxonomy" id="9913"/>
    <lineage>
        <taxon>Eukaryota</taxon>
        <taxon>Metazoa</taxon>
        <taxon>Chordata</taxon>
        <taxon>Craniata</taxon>
        <taxon>Vertebrata</taxon>
        <taxon>Euteleostomi</taxon>
        <taxon>Mammalia</taxon>
        <taxon>Eutheria</taxon>
        <taxon>Laurasiatheria</taxon>
        <taxon>Artiodactyla</taxon>
        <taxon>Ruminantia</taxon>
        <taxon>Pecora</taxon>
        <taxon>Bovidae</taxon>
        <taxon>Bovinae</taxon>
        <taxon>Bos</taxon>
    </lineage>
</organism>
<gene>
    <name type="primary">NADSYN1</name>
</gene>
<feature type="chain" id="PRO_0000237576" description="Glutamine-dependent NAD(+) synthetase">
    <location>
        <begin position="1"/>
        <end position="706"/>
    </location>
</feature>
<feature type="domain" description="CN hydrolase" evidence="4">
    <location>
        <begin position="5"/>
        <end position="275"/>
    </location>
</feature>
<feature type="region of interest" description="Ligase" evidence="1">
    <location>
        <begin position="325"/>
        <end position="706"/>
    </location>
</feature>
<feature type="active site" description="Proton acceptor; for glutaminase activity" evidence="2">
    <location>
        <position position="45"/>
    </location>
</feature>
<feature type="active site" description="For glutaminase activity" evidence="2">
    <location>
        <position position="114"/>
    </location>
</feature>
<feature type="active site" description="Nucleophile; for glutaminase activity" evidence="2">
    <location>
        <position position="175"/>
    </location>
</feature>
<feature type="active site" evidence="1">
    <location>
        <position position="357"/>
    </location>
</feature>
<feature type="binding site" evidence="1">
    <location>
        <begin position="355"/>
        <end position="362"/>
    </location>
    <ligand>
        <name>ATP</name>
        <dbReference type="ChEBI" id="CHEBI:30616"/>
    </ligand>
</feature>
<evidence type="ECO:0000250" key="1"/>
<evidence type="ECO:0000250" key="2">
    <source>
        <dbReference type="UniProtKB" id="P9WJJ3"/>
    </source>
</evidence>
<evidence type="ECO:0000250" key="3">
    <source>
        <dbReference type="UniProtKB" id="Q6IA69"/>
    </source>
</evidence>
<evidence type="ECO:0000255" key="4">
    <source>
        <dbReference type="PROSITE-ProRule" id="PRU00054"/>
    </source>
</evidence>
<evidence type="ECO:0000305" key="5"/>
<reference key="1">
    <citation type="submission" date="2005-08" db="EMBL/GenBank/DDBJ databases">
        <authorList>
            <consortium name="NIH - Mammalian Gene Collection (MGC) project"/>
        </authorList>
    </citation>
    <scope>NUCLEOTIDE SEQUENCE [LARGE SCALE MRNA]</scope>
    <source>
        <strain>Crossbred X Angus</strain>
        <tissue>Ileum</tissue>
    </source>
</reference>
<protein>
    <recommendedName>
        <fullName>Glutamine-dependent NAD(+) synthetase</fullName>
        <ecNumber evidence="3">6.3.5.1</ecNumber>
    </recommendedName>
    <alternativeName>
        <fullName>NAD(+) synthase [glutamine-hydrolyzing]</fullName>
    </alternativeName>
    <alternativeName>
        <fullName>NAD(+) synthetase</fullName>
    </alternativeName>
</protein>
<comment type="function">
    <text evidence="3">Catalyzes the ATP-dependent amidation of deamido-NAD to form NAD. Uses L-glutamine as a nitrogen source.</text>
</comment>
<comment type="catalytic activity">
    <reaction evidence="3">
        <text>deamido-NAD(+) + L-glutamine + ATP + H2O = L-glutamate + AMP + diphosphate + NAD(+) + H(+)</text>
        <dbReference type="Rhea" id="RHEA:24384"/>
        <dbReference type="ChEBI" id="CHEBI:15377"/>
        <dbReference type="ChEBI" id="CHEBI:15378"/>
        <dbReference type="ChEBI" id="CHEBI:29985"/>
        <dbReference type="ChEBI" id="CHEBI:30616"/>
        <dbReference type="ChEBI" id="CHEBI:33019"/>
        <dbReference type="ChEBI" id="CHEBI:57540"/>
        <dbReference type="ChEBI" id="CHEBI:58359"/>
        <dbReference type="ChEBI" id="CHEBI:58437"/>
        <dbReference type="ChEBI" id="CHEBI:456215"/>
        <dbReference type="EC" id="6.3.5.1"/>
    </reaction>
</comment>
<comment type="pathway">
    <text evidence="3">Cofactor biosynthesis; NAD(+) biosynthesis; NAD(+) from deamido-NAD(+) (L-Gln route): step 1/1.</text>
</comment>
<comment type="subunit">
    <text evidence="1">Homohexamer.</text>
</comment>
<comment type="similarity">
    <text evidence="5">In the C-terminal section; belongs to the NAD synthetase family.</text>
</comment>
<keyword id="KW-0067">ATP-binding</keyword>
<keyword id="KW-0436">Ligase</keyword>
<keyword id="KW-0520">NAD</keyword>
<keyword id="KW-0547">Nucleotide-binding</keyword>
<keyword id="KW-1185">Reference proteome</keyword>
<name>NADE_BOVIN</name>
<sequence length="706" mass="79400">MGRKVTVATCALNQWALDFEGNLQRILKSIEIAKHRGARYRLGPELEICGYGCWDHYYESDTLLHSLQVLAALLESPVTQDIICDVGMPVMHRNVRYNCRVIFLNRKILLIRPKMALANEGNYRELRWFTPWSRSRQTEEYFLPRMLQDLTKQETVPFGDAVLSTWDTCIGSEVCEELWTPHSPHVDMGLDGVEIFTNASGSHHVLRKAHARVDLVTMATTKNGGIYLLANQKGCDGDRLYYDGCALIAMNGSIFAQGSQFSLDDVEVLTATLDLEDIRSYRAEISSRNLAASRVSPYPRVKVDFALSCHEDLLEPVSEPIEWKYHSPAEEISLGPACWLWDFLRRSRQAGFFLPLSGGVDSAATACLVYSMCHQVCEAVKRGNLEVLADVRTIVNQLSYTPQDPRELCGRVLTTCYMASENSSQETCDRARELAQQIGSHHIGLHIDPVVKALVGLFSLVTGASPRFAVHGGSDRENLALQNVQARVRMVIAYLFAQLSLWSRGAPGGLLVLGSANVDESLLGYLTKYDCSSADINPIGGISKTDLRAFVQLCVERFQLPALQSILAAPATAELEPLAHGRVSQTDEEDMGMTYAELSVYGRLRKVAKTGPYSMFCKLLDMWRDTCSPRQVADKVKCFFSKYSMNRHKMTTLTPAYHAESYSPDDNRFDLRPFLYNTRWPWQFRCIENQVLQLEGRQRQELDGVD</sequence>
<accession>Q3ZBF0</accession>